<organism>
    <name type="scientific">Bacillus subtilis (strain 168)</name>
    <dbReference type="NCBI Taxonomy" id="224308"/>
    <lineage>
        <taxon>Bacteria</taxon>
        <taxon>Bacillati</taxon>
        <taxon>Bacillota</taxon>
        <taxon>Bacilli</taxon>
        <taxon>Bacillales</taxon>
        <taxon>Bacillaceae</taxon>
        <taxon>Bacillus</taxon>
    </lineage>
</organism>
<feature type="chain" id="PRO_0000049554" description="Uncharacterized protein YhbE">
    <location>
        <begin position="1"/>
        <end position="237"/>
    </location>
</feature>
<protein>
    <recommendedName>
        <fullName>Uncharacterized protein YhbE</fullName>
    </recommendedName>
    <alternativeName>
        <fullName>ORF1</fullName>
    </alternativeName>
</protein>
<accession>P39132</accession>
<name>YHBE_BACSU</name>
<keyword id="KW-1185">Reference proteome</keyword>
<evidence type="ECO:0000305" key="1"/>
<reference key="1">
    <citation type="submission" date="1997-03" db="EMBL/GenBank/DDBJ databases">
        <authorList>
            <person name="Cummings N.J."/>
            <person name="Ruiz-Teran F."/>
            <person name="Connerton I.F."/>
        </authorList>
    </citation>
    <scope>NUCLEOTIDE SEQUENCE [GENOMIC DNA]</scope>
    <source>
        <strain>168</strain>
    </source>
</reference>
<reference key="2">
    <citation type="journal article" date="1997" name="Nature">
        <title>The complete genome sequence of the Gram-positive bacterium Bacillus subtilis.</title>
        <authorList>
            <person name="Kunst F."/>
            <person name="Ogasawara N."/>
            <person name="Moszer I."/>
            <person name="Albertini A.M."/>
            <person name="Alloni G."/>
            <person name="Azevedo V."/>
            <person name="Bertero M.G."/>
            <person name="Bessieres P."/>
            <person name="Bolotin A."/>
            <person name="Borchert S."/>
            <person name="Borriss R."/>
            <person name="Boursier L."/>
            <person name="Brans A."/>
            <person name="Braun M."/>
            <person name="Brignell S.C."/>
            <person name="Bron S."/>
            <person name="Brouillet S."/>
            <person name="Bruschi C.V."/>
            <person name="Caldwell B."/>
            <person name="Capuano V."/>
            <person name="Carter N.M."/>
            <person name="Choi S.-K."/>
            <person name="Codani J.-J."/>
            <person name="Connerton I.F."/>
            <person name="Cummings N.J."/>
            <person name="Daniel R.A."/>
            <person name="Denizot F."/>
            <person name="Devine K.M."/>
            <person name="Duesterhoeft A."/>
            <person name="Ehrlich S.D."/>
            <person name="Emmerson P.T."/>
            <person name="Entian K.-D."/>
            <person name="Errington J."/>
            <person name="Fabret C."/>
            <person name="Ferrari E."/>
            <person name="Foulger D."/>
            <person name="Fritz C."/>
            <person name="Fujita M."/>
            <person name="Fujita Y."/>
            <person name="Fuma S."/>
            <person name="Galizzi A."/>
            <person name="Galleron N."/>
            <person name="Ghim S.-Y."/>
            <person name="Glaser P."/>
            <person name="Goffeau A."/>
            <person name="Golightly E.J."/>
            <person name="Grandi G."/>
            <person name="Guiseppi G."/>
            <person name="Guy B.J."/>
            <person name="Haga K."/>
            <person name="Haiech J."/>
            <person name="Harwood C.R."/>
            <person name="Henaut A."/>
            <person name="Hilbert H."/>
            <person name="Holsappel S."/>
            <person name="Hosono S."/>
            <person name="Hullo M.-F."/>
            <person name="Itaya M."/>
            <person name="Jones L.-M."/>
            <person name="Joris B."/>
            <person name="Karamata D."/>
            <person name="Kasahara Y."/>
            <person name="Klaerr-Blanchard M."/>
            <person name="Klein C."/>
            <person name="Kobayashi Y."/>
            <person name="Koetter P."/>
            <person name="Koningstein G."/>
            <person name="Krogh S."/>
            <person name="Kumano M."/>
            <person name="Kurita K."/>
            <person name="Lapidus A."/>
            <person name="Lardinois S."/>
            <person name="Lauber J."/>
            <person name="Lazarevic V."/>
            <person name="Lee S.-M."/>
            <person name="Levine A."/>
            <person name="Liu H."/>
            <person name="Masuda S."/>
            <person name="Mauel C."/>
            <person name="Medigue C."/>
            <person name="Medina N."/>
            <person name="Mellado R.P."/>
            <person name="Mizuno M."/>
            <person name="Moestl D."/>
            <person name="Nakai S."/>
            <person name="Noback M."/>
            <person name="Noone D."/>
            <person name="O'Reilly M."/>
            <person name="Ogawa K."/>
            <person name="Ogiwara A."/>
            <person name="Oudega B."/>
            <person name="Park S.-H."/>
            <person name="Parro V."/>
            <person name="Pohl T.M."/>
            <person name="Portetelle D."/>
            <person name="Porwollik S."/>
            <person name="Prescott A.M."/>
            <person name="Presecan E."/>
            <person name="Pujic P."/>
            <person name="Purnelle B."/>
            <person name="Rapoport G."/>
            <person name="Rey M."/>
            <person name="Reynolds S."/>
            <person name="Rieger M."/>
            <person name="Rivolta C."/>
            <person name="Rocha E."/>
            <person name="Roche B."/>
            <person name="Rose M."/>
            <person name="Sadaie Y."/>
            <person name="Sato T."/>
            <person name="Scanlan E."/>
            <person name="Schleich S."/>
            <person name="Schroeter R."/>
            <person name="Scoffone F."/>
            <person name="Sekiguchi J."/>
            <person name="Sekowska A."/>
            <person name="Seror S.J."/>
            <person name="Serror P."/>
            <person name="Shin B.-S."/>
            <person name="Soldo B."/>
            <person name="Sorokin A."/>
            <person name="Tacconi E."/>
            <person name="Takagi T."/>
            <person name="Takahashi H."/>
            <person name="Takemaru K."/>
            <person name="Takeuchi M."/>
            <person name="Tamakoshi A."/>
            <person name="Tanaka T."/>
            <person name="Terpstra P."/>
            <person name="Tognoni A."/>
            <person name="Tosato V."/>
            <person name="Uchiyama S."/>
            <person name="Vandenbol M."/>
            <person name="Vannier F."/>
            <person name="Vassarotti A."/>
            <person name="Viari A."/>
            <person name="Wambutt R."/>
            <person name="Wedler E."/>
            <person name="Wedler H."/>
            <person name="Weitzenegger T."/>
            <person name="Winters P."/>
            <person name="Wipat A."/>
            <person name="Yamamoto H."/>
            <person name="Yamane K."/>
            <person name="Yasumoto K."/>
            <person name="Yata K."/>
            <person name="Yoshida K."/>
            <person name="Yoshikawa H.-F."/>
            <person name="Zumstein E."/>
            <person name="Yoshikawa H."/>
            <person name="Danchin A."/>
        </authorList>
    </citation>
    <scope>NUCLEOTIDE SEQUENCE [LARGE SCALE GENOMIC DNA]</scope>
    <source>
        <strain>168</strain>
    </source>
</reference>
<reference key="3">
    <citation type="journal article" date="1996" name="Gene">
        <title>Cloning and characterization of the Bacillus subtilis prkA gene encoding a novel serine protein kinase.</title>
        <authorList>
            <person name="Fischer C."/>
            <person name="Geourjon C."/>
            <person name="Bourson C."/>
            <person name="Deutscher J."/>
        </authorList>
    </citation>
    <scope>NUCLEOTIDE SEQUENCE [GENOMIC DNA] OF 96-237</scope>
    <source>
        <strain>168</strain>
    </source>
</reference>
<proteinExistence type="inferred from homology"/>
<gene>
    <name type="primary">yhbE</name>
    <name type="synonym">ygaT</name>
    <name type="synonym">yzdA</name>
    <name type="ordered locus">BSU08950</name>
</gene>
<dbReference type="EMBL" id="Z93102">
    <property type="protein sequence ID" value="CAB07518.1"/>
    <property type="molecule type" value="Genomic_DNA"/>
</dbReference>
<dbReference type="EMBL" id="AL009126">
    <property type="protein sequence ID" value="CAB12723.1"/>
    <property type="molecule type" value="Genomic_DNA"/>
</dbReference>
<dbReference type="EMBL" id="X79388">
    <property type="protein sequence ID" value="CAA55931.1"/>
    <property type="molecule type" value="Genomic_DNA"/>
</dbReference>
<dbReference type="PIR" id="H69820">
    <property type="entry name" value="H69820"/>
</dbReference>
<dbReference type="RefSeq" id="NP_388776.1">
    <property type="nucleotide sequence ID" value="NC_000964.3"/>
</dbReference>
<dbReference type="RefSeq" id="WP_003244751.1">
    <property type="nucleotide sequence ID" value="NZ_OZ025638.1"/>
</dbReference>
<dbReference type="SMR" id="P39132"/>
<dbReference type="FunCoup" id="P39132">
    <property type="interactions" value="120"/>
</dbReference>
<dbReference type="STRING" id="224308.BSU08950"/>
<dbReference type="PaxDb" id="224308-BSU08950"/>
<dbReference type="EnsemblBacteria" id="CAB12723">
    <property type="protein sequence ID" value="CAB12723"/>
    <property type="gene ID" value="BSU_08950"/>
</dbReference>
<dbReference type="GeneID" id="939252"/>
<dbReference type="KEGG" id="bsu:BSU08950"/>
<dbReference type="PATRIC" id="fig|224308.179.peg.966"/>
<dbReference type="eggNOG" id="COG1664">
    <property type="taxonomic scope" value="Bacteria"/>
</dbReference>
<dbReference type="InParanoid" id="P39132"/>
<dbReference type="OrthoDB" id="1730007at2"/>
<dbReference type="PhylomeDB" id="P39132"/>
<dbReference type="BioCyc" id="BSUB:BSU08950-MONOMER"/>
<dbReference type="Proteomes" id="UP000001570">
    <property type="component" value="Chromosome"/>
</dbReference>
<dbReference type="InterPro" id="IPR007607">
    <property type="entry name" value="BacA/B"/>
</dbReference>
<dbReference type="PANTHER" id="PTHR35024">
    <property type="entry name" value="HYPOTHETICAL CYTOSOLIC PROTEIN"/>
    <property type="match status" value="1"/>
</dbReference>
<dbReference type="PANTHER" id="PTHR35024:SF4">
    <property type="entry name" value="POLYMER-FORMING CYTOSKELETAL PROTEIN"/>
    <property type="match status" value="1"/>
</dbReference>
<dbReference type="Pfam" id="PF04519">
    <property type="entry name" value="Bactofilin"/>
    <property type="match status" value="1"/>
</dbReference>
<sequence length="237" mass="24723">MDVVEKLVINGSGSSKGGTFQSVEINGSGTVAGDVECDTFSFNGNGKADGSVKAKAVTISGSGKIHGDVEAESIRMNGTGFIQGEVSAKQLKIAGSSTFGGTVKADGIDISGKAVMEADCETETFQSEGKCKISGLLNADQVIIKLSAGESYAREIGCRHLQVTCRKGMLTLLRLMPQPVLTAELIEGDVIELTNTKAKTVRGNKVIIGPDCQIETVEYSGDYTCDPSASVETSTKL</sequence>
<comment type="similarity">
    <text evidence="1">Belongs to the bactofilin family.</text>
</comment>